<feature type="chain" id="PRO_1000142869" description="Large ribosomal subunit protein uL15">
    <location>
        <begin position="1"/>
        <end position="158"/>
    </location>
</feature>
<feature type="region of interest" description="Disordered" evidence="2">
    <location>
        <begin position="1"/>
        <end position="45"/>
    </location>
</feature>
<feature type="compositionally biased region" description="Basic and acidic residues" evidence="2">
    <location>
        <begin position="1"/>
        <end position="13"/>
    </location>
</feature>
<feature type="compositionally biased region" description="Gly residues" evidence="2">
    <location>
        <begin position="21"/>
        <end position="35"/>
    </location>
</feature>
<keyword id="KW-1185">Reference proteome</keyword>
<keyword id="KW-0687">Ribonucleoprotein</keyword>
<keyword id="KW-0689">Ribosomal protein</keyword>
<keyword id="KW-0694">RNA-binding</keyword>
<keyword id="KW-0699">rRNA-binding</keyword>
<dbReference type="EMBL" id="CP001191">
    <property type="protein sequence ID" value="ACI54645.1"/>
    <property type="molecule type" value="Genomic_DNA"/>
</dbReference>
<dbReference type="RefSeq" id="WP_012557366.1">
    <property type="nucleotide sequence ID" value="NC_011369.1"/>
</dbReference>
<dbReference type="SMR" id="B5ZYV4"/>
<dbReference type="STRING" id="395492.Rleg2_1351"/>
<dbReference type="KEGG" id="rlt:Rleg2_1351"/>
<dbReference type="eggNOG" id="COG0200">
    <property type="taxonomic scope" value="Bacteria"/>
</dbReference>
<dbReference type="HOGENOM" id="CLU_055188_4_0_5"/>
<dbReference type="Proteomes" id="UP000008330">
    <property type="component" value="Chromosome"/>
</dbReference>
<dbReference type="GO" id="GO:0022625">
    <property type="term" value="C:cytosolic large ribosomal subunit"/>
    <property type="evidence" value="ECO:0007669"/>
    <property type="project" value="TreeGrafter"/>
</dbReference>
<dbReference type="GO" id="GO:0019843">
    <property type="term" value="F:rRNA binding"/>
    <property type="evidence" value="ECO:0007669"/>
    <property type="project" value="UniProtKB-UniRule"/>
</dbReference>
<dbReference type="GO" id="GO:0003735">
    <property type="term" value="F:structural constituent of ribosome"/>
    <property type="evidence" value="ECO:0007669"/>
    <property type="project" value="InterPro"/>
</dbReference>
<dbReference type="GO" id="GO:0006412">
    <property type="term" value="P:translation"/>
    <property type="evidence" value="ECO:0007669"/>
    <property type="project" value="UniProtKB-UniRule"/>
</dbReference>
<dbReference type="Gene3D" id="3.100.10.10">
    <property type="match status" value="1"/>
</dbReference>
<dbReference type="HAMAP" id="MF_01341">
    <property type="entry name" value="Ribosomal_uL15"/>
    <property type="match status" value="1"/>
</dbReference>
<dbReference type="InterPro" id="IPR030878">
    <property type="entry name" value="Ribosomal_uL15"/>
</dbReference>
<dbReference type="InterPro" id="IPR021131">
    <property type="entry name" value="Ribosomal_uL15/eL18"/>
</dbReference>
<dbReference type="InterPro" id="IPR036227">
    <property type="entry name" value="Ribosomal_uL15/eL18_sf"/>
</dbReference>
<dbReference type="InterPro" id="IPR005749">
    <property type="entry name" value="Ribosomal_uL15_bac-type"/>
</dbReference>
<dbReference type="InterPro" id="IPR001196">
    <property type="entry name" value="Ribosomal_uL15_CS"/>
</dbReference>
<dbReference type="NCBIfam" id="TIGR01071">
    <property type="entry name" value="rplO_bact"/>
    <property type="match status" value="1"/>
</dbReference>
<dbReference type="PANTHER" id="PTHR12934">
    <property type="entry name" value="50S RIBOSOMAL PROTEIN L15"/>
    <property type="match status" value="1"/>
</dbReference>
<dbReference type="PANTHER" id="PTHR12934:SF11">
    <property type="entry name" value="LARGE RIBOSOMAL SUBUNIT PROTEIN UL15M"/>
    <property type="match status" value="1"/>
</dbReference>
<dbReference type="Pfam" id="PF00828">
    <property type="entry name" value="Ribosomal_L27A"/>
    <property type="match status" value="1"/>
</dbReference>
<dbReference type="SUPFAM" id="SSF52080">
    <property type="entry name" value="Ribosomal proteins L15p and L18e"/>
    <property type="match status" value="1"/>
</dbReference>
<dbReference type="PROSITE" id="PS00475">
    <property type="entry name" value="RIBOSOMAL_L15"/>
    <property type="match status" value="1"/>
</dbReference>
<accession>B5ZYV4</accession>
<reference key="1">
    <citation type="journal article" date="2010" name="Stand. Genomic Sci.">
        <title>Complete genome sequence of Rhizobium leguminosarum bv trifolii strain WSM2304, an effective microsymbiont of the South American clover Trifolium polymorphum.</title>
        <authorList>
            <person name="Reeve W."/>
            <person name="O'Hara G."/>
            <person name="Chain P."/>
            <person name="Ardley J."/>
            <person name="Brau L."/>
            <person name="Nandesena K."/>
            <person name="Tiwari R."/>
            <person name="Malfatti S."/>
            <person name="Kiss H."/>
            <person name="Lapidus A."/>
            <person name="Copeland A."/>
            <person name="Nolan M."/>
            <person name="Land M."/>
            <person name="Ivanova N."/>
            <person name="Mavromatis K."/>
            <person name="Markowitz V."/>
            <person name="Kyrpides N."/>
            <person name="Melino V."/>
            <person name="Denton M."/>
            <person name="Yates R."/>
            <person name="Howieson J."/>
        </authorList>
    </citation>
    <scope>NUCLEOTIDE SEQUENCE [LARGE SCALE GENOMIC DNA]</scope>
    <source>
        <strain>WSM2304</strain>
    </source>
</reference>
<gene>
    <name evidence="1" type="primary">rplO</name>
    <name type="ordered locus">Rleg2_1351</name>
</gene>
<organism>
    <name type="scientific">Rhizobium leguminosarum bv. trifolii (strain WSM2304)</name>
    <dbReference type="NCBI Taxonomy" id="395492"/>
    <lineage>
        <taxon>Bacteria</taxon>
        <taxon>Pseudomonadati</taxon>
        <taxon>Pseudomonadota</taxon>
        <taxon>Alphaproteobacteria</taxon>
        <taxon>Hyphomicrobiales</taxon>
        <taxon>Rhizobiaceae</taxon>
        <taxon>Rhizobium/Agrobacterium group</taxon>
        <taxon>Rhizobium</taxon>
    </lineage>
</organism>
<sequence>MKLNEIKDNEGSTHSRKRLGRGIGSGSGKTGGRGVKGQKSRSGVAINGFEGGQMPIYRRLPKRGFNNIFASDFVVVSLARIQAAIDAGKLDAKATVDAAALKAAGVIRRTKDGVRVLADGELKAKITIVVAGASKPAVEKIEKAGGTVTLLSAPAAAE</sequence>
<comment type="function">
    <text evidence="1">Binds to the 23S rRNA.</text>
</comment>
<comment type="subunit">
    <text evidence="1">Part of the 50S ribosomal subunit.</text>
</comment>
<comment type="similarity">
    <text evidence="1">Belongs to the universal ribosomal protein uL15 family.</text>
</comment>
<protein>
    <recommendedName>
        <fullName evidence="1">Large ribosomal subunit protein uL15</fullName>
    </recommendedName>
    <alternativeName>
        <fullName evidence="3">50S ribosomal protein L15</fullName>
    </alternativeName>
</protein>
<proteinExistence type="inferred from homology"/>
<name>RL15_RHILW</name>
<evidence type="ECO:0000255" key="1">
    <source>
        <dbReference type="HAMAP-Rule" id="MF_01341"/>
    </source>
</evidence>
<evidence type="ECO:0000256" key="2">
    <source>
        <dbReference type="SAM" id="MobiDB-lite"/>
    </source>
</evidence>
<evidence type="ECO:0000305" key="3"/>